<keyword id="KW-0378">Hydrolase</keyword>
<keyword id="KW-0479">Metal-binding</keyword>
<keyword id="KW-0546">Nucleotide metabolism</keyword>
<keyword id="KW-1185">Reference proteome</keyword>
<keyword id="KW-0862">Zinc</keyword>
<name>ADD_ECO24</name>
<sequence length="333" mass="36397">MIDTTLPLTDIHRHLDGNIRPQTILELGRQYNISLPAQSLETLIPHVQVIANEPDLVSFLTKLDWGVKVLASLDACRRVAFENIEDAARHGLHYVELRFSPGYMAMAHQLPVAGVVEAVIDGVREGCRTFGVQAKLIGIMSRTFGEAACQQELEAFLAHRDQITALDLAGDELGFPGSLFLSHFNRARDAGWHITVHAGEAAGPESIWQAIRELGAERIGHGVKAIEDRALMDFLAEQQIGIESCLTSNIQTSTVAELAAHPLKTFLEHGIRASINTDDPGVQGVDIIHEYTVAAPAAGLSREQIRQAQINGLEMAFLSAEEKRALREKVAAK</sequence>
<comment type="function">
    <text evidence="1">Catalyzes the hydrolytic deamination of adenosine and 2-deoxyadenosine.</text>
</comment>
<comment type="catalytic activity">
    <reaction evidence="1">
        <text>adenosine + H2O + H(+) = inosine + NH4(+)</text>
        <dbReference type="Rhea" id="RHEA:24408"/>
        <dbReference type="ChEBI" id="CHEBI:15377"/>
        <dbReference type="ChEBI" id="CHEBI:15378"/>
        <dbReference type="ChEBI" id="CHEBI:16335"/>
        <dbReference type="ChEBI" id="CHEBI:17596"/>
        <dbReference type="ChEBI" id="CHEBI:28938"/>
        <dbReference type="EC" id="3.5.4.4"/>
    </reaction>
    <physiologicalReaction direction="left-to-right" evidence="1">
        <dbReference type="Rhea" id="RHEA:24409"/>
    </physiologicalReaction>
</comment>
<comment type="catalytic activity">
    <reaction evidence="1">
        <text>2'-deoxyadenosine + H2O + H(+) = 2'-deoxyinosine + NH4(+)</text>
        <dbReference type="Rhea" id="RHEA:28190"/>
        <dbReference type="ChEBI" id="CHEBI:15377"/>
        <dbReference type="ChEBI" id="CHEBI:15378"/>
        <dbReference type="ChEBI" id="CHEBI:17256"/>
        <dbReference type="ChEBI" id="CHEBI:28938"/>
        <dbReference type="ChEBI" id="CHEBI:28997"/>
        <dbReference type="EC" id="3.5.4.4"/>
    </reaction>
    <physiologicalReaction direction="left-to-right" evidence="1">
        <dbReference type="Rhea" id="RHEA:28191"/>
    </physiologicalReaction>
</comment>
<comment type="cofactor">
    <cofactor evidence="1">
        <name>Zn(2+)</name>
        <dbReference type="ChEBI" id="CHEBI:29105"/>
    </cofactor>
    <text evidence="1">Binds 1 zinc ion per subunit.</text>
</comment>
<comment type="similarity">
    <text evidence="1">Belongs to the metallo-dependent hydrolases superfamily. Adenosine and AMP deaminases family. Adenosine deaminase subfamily.</text>
</comment>
<accession>A7ZM83</accession>
<protein>
    <recommendedName>
        <fullName evidence="1">Adenosine deaminase</fullName>
        <ecNumber evidence="1">3.5.4.4</ecNumber>
    </recommendedName>
    <alternativeName>
        <fullName evidence="1">Adenosine aminohydrolase</fullName>
    </alternativeName>
</protein>
<proteinExistence type="inferred from homology"/>
<organism>
    <name type="scientific">Escherichia coli O139:H28 (strain E24377A / ETEC)</name>
    <dbReference type="NCBI Taxonomy" id="331111"/>
    <lineage>
        <taxon>Bacteria</taxon>
        <taxon>Pseudomonadati</taxon>
        <taxon>Pseudomonadota</taxon>
        <taxon>Gammaproteobacteria</taxon>
        <taxon>Enterobacterales</taxon>
        <taxon>Enterobacteriaceae</taxon>
        <taxon>Escherichia</taxon>
    </lineage>
</organism>
<dbReference type="EC" id="3.5.4.4" evidence="1"/>
<dbReference type="EMBL" id="CP000800">
    <property type="protein sequence ID" value="ABV16769.1"/>
    <property type="molecule type" value="Genomic_DNA"/>
</dbReference>
<dbReference type="RefSeq" id="WP_000567490.1">
    <property type="nucleotide sequence ID" value="NC_009801.1"/>
</dbReference>
<dbReference type="SMR" id="A7ZM83"/>
<dbReference type="GeneID" id="75204467"/>
<dbReference type="KEGG" id="ecw:EcE24377A_1831"/>
<dbReference type="HOGENOM" id="CLU_039228_0_2_6"/>
<dbReference type="Proteomes" id="UP000001122">
    <property type="component" value="Chromosome"/>
</dbReference>
<dbReference type="GO" id="GO:0005829">
    <property type="term" value="C:cytosol"/>
    <property type="evidence" value="ECO:0007669"/>
    <property type="project" value="TreeGrafter"/>
</dbReference>
<dbReference type="GO" id="GO:0046936">
    <property type="term" value="F:2'-deoxyadenosine deaminase activity"/>
    <property type="evidence" value="ECO:0007669"/>
    <property type="project" value="RHEA"/>
</dbReference>
<dbReference type="GO" id="GO:0004000">
    <property type="term" value="F:adenosine deaminase activity"/>
    <property type="evidence" value="ECO:0007669"/>
    <property type="project" value="UniProtKB-UniRule"/>
</dbReference>
<dbReference type="GO" id="GO:0008270">
    <property type="term" value="F:zinc ion binding"/>
    <property type="evidence" value="ECO:0007669"/>
    <property type="project" value="UniProtKB-UniRule"/>
</dbReference>
<dbReference type="GO" id="GO:0006154">
    <property type="term" value="P:adenosine catabolic process"/>
    <property type="evidence" value="ECO:0007669"/>
    <property type="project" value="TreeGrafter"/>
</dbReference>
<dbReference type="GO" id="GO:0043103">
    <property type="term" value="P:hypoxanthine salvage"/>
    <property type="evidence" value="ECO:0007669"/>
    <property type="project" value="TreeGrafter"/>
</dbReference>
<dbReference type="GO" id="GO:0046103">
    <property type="term" value="P:inosine biosynthetic process"/>
    <property type="evidence" value="ECO:0007669"/>
    <property type="project" value="TreeGrafter"/>
</dbReference>
<dbReference type="GO" id="GO:0009117">
    <property type="term" value="P:nucleotide metabolic process"/>
    <property type="evidence" value="ECO:0007669"/>
    <property type="project" value="UniProtKB-KW"/>
</dbReference>
<dbReference type="GO" id="GO:0009168">
    <property type="term" value="P:purine ribonucleoside monophosphate biosynthetic process"/>
    <property type="evidence" value="ECO:0007669"/>
    <property type="project" value="UniProtKB-UniRule"/>
</dbReference>
<dbReference type="CDD" id="cd01320">
    <property type="entry name" value="ADA"/>
    <property type="match status" value="1"/>
</dbReference>
<dbReference type="FunFam" id="3.20.20.140:FF:000009">
    <property type="entry name" value="Adenosine deaminase"/>
    <property type="match status" value="1"/>
</dbReference>
<dbReference type="Gene3D" id="3.20.20.140">
    <property type="entry name" value="Metal-dependent hydrolases"/>
    <property type="match status" value="1"/>
</dbReference>
<dbReference type="HAMAP" id="MF_00540">
    <property type="entry name" value="A_deaminase"/>
    <property type="match status" value="1"/>
</dbReference>
<dbReference type="InterPro" id="IPR006650">
    <property type="entry name" value="A/AMP_deam_AS"/>
</dbReference>
<dbReference type="InterPro" id="IPR028893">
    <property type="entry name" value="A_deaminase"/>
</dbReference>
<dbReference type="InterPro" id="IPR001365">
    <property type="entry name" value="A_deaminase_dom"/>
</dbReference>
<dbReference type="InterPro" id="IPR006330">
    <property type="entry name" value="Ado/ade_deaminase"/>
</dbReference>
<dbReference type="InterPro" id="IPR032466">
    <property type="entry name" value="Metal_Hydrolase"/>
</dbReference>
<dbReference type="NCBIfam" id="TIGR01430">
    <property type="entry name" value="aden_deam"/>
    <property type="match status" value="1"/>
</dbReference>
<dbReference type="NCBIfam" id="NF006846">
    <property type="entry name" value="PRK09358.1-1"/>
    <property type="match status" value="1"/>
</dbReference>
<dbReference type="PANTHER" id="PTHR11409">
    <property type="entry name" value="ADENOSINE DEAMINASE"/>
    <property type="match status" value="1"/>
</dbReference>
<dbReference type="PANTHER" id="PTHR11409:SF43">
    <property type="entry name" value="ADENOSINE DEAMINASE"/>
    <property type="match status" value="1"/>
</dbReference>
<dbReference type="Pfam" id="PF00962">
    <property type="entry name" value="A_deaminase"/>
    <property type="match status" value="1"/>
</dbReference>
<dbReference type="SUPFAM" id="SSF51556">
    <property type="entry name" value="Metallo-dependent hydrolases"/>
    <property type="match status" value="1"/>
</dbReference>
<dbReference type="PROSITE" id="PS00485">
    <property type="entry name" value="A_DEAMINASE"/>
    <property type="match status" value="1"/>
</dbReference>
<reference key="1">
    <citation type="journal article" date="2008" name="J. Bacteriol.">
        <title>The pangenome structure of Escherichia coli: comparative genomic analysis of E. coli commensal and pathogenic isolates.</title>
        <authorList>
            <person name="Rasko D.A."/>
            <person name="Rosovitz M.J."/>
            <person name="Myers G.S.A."/>
            <person name="Mongodin E.F."/>
            <person name="Fricke W.F."/>
            <person name="Gajer P."/>
            <person name="Crabtree J."/>
            <person name="Sebaihia M."/>
            <person name="Thomson N.R."/>
            <person name="Chaudhuri R."/>
            <person name="Henderson I.R."/>
            <person name="Sperandio V."/>
            <person name="Ravel J."/>
        </authorList>
    </citation>
    <scope>NUCLEOTIDE SEQUENCE [LARGE SCALE GENOMIC DNA]</scope>
    <source>
        <strain>E24377A / ETEC</strain>
    </source>
</reference>
<gene>
    <name evidence="1" type="primary">add</name>
    <name type="ordered locus">EcE24377A_1831</name>
</gene>
<feature type="chain" id="PRO_1000061054" description="Adenosine deaminase">
    <location>
        <begin position="1"/>
        <end position="333"/>
    </location>
</feature>
<feature type="active site" description="Proton donor" evidence="1">
    <location>
        <position position="200"/>
    </location>
</feature>
<feature type="binding site" evidence="1">
    <location>
        <position position="12"/>
    </location>
    <ligand>
        <name>Zn(2+)</name>
        <dbReference type="ChEBI" id="CHEBI:29105"/>
        <note>catalytic</note>
    </ligand>
</feature>
<feature type="binding site" evidence="1">
    <location>
        <position position="14"/>
    </location>
    <ligand>
        <name>substrate</name>
    </ligand>
</feature>
<feature type="binding site" evidence="1">
    <location>
        <position position="14"/>
    </location>
    <ligand>
        <name>Zn(2+)</name>
        <dbReference type="ChEBI" id="CHEBI:29105"/>
        <note>catalytic</note>
    </ligand>
</feature>
<feature type="binding site" evidence="1">
    <location>
        <position position="16"/>
    </location>
    <ligand>
        <name>substrate</name>
    </ligand>
</feature>
<feature type="binding site" evidence="1">
    <location>
        <position position="170"/>
    </location>
    <ligand>
        <name>substrate</name>
    </ligand>
</feature>
<feature type="binding site" evidence="1">
    <location>
        <position position="197"/>
    </location>
    <ligand>
        <name>Zn(2+)</name>
        <dbReference type="ChEBI" id="CHEBI:29105"/>
        <note>catalytic</note>
    </ligand>
</feature>
<feature type="binding site" evidence="1">
    <location>
        <position position="278"/>
    </location>
    <ligand>
        <name>Zn(2+)</name>
        <dbReference type="ChEBI" id="CHEBI:29105"/>
        <note>catalytic</note>
    </ligand>
</feature>
<feature type="binding site" evidence="1">
    <location>
        <position position="279"/>
    </location>
    <ligand>
        <name>substrate</name>
    </ligand>
</feature>
<feature type="site" description="Important for catalytic activity" evidence="1">
    <location>
        <position position="221"/>
    </location>
</feature>
<evidence type="ECO:0000255" key="1">
    <source>
        <dbReference type="HAMAP-Rule" id="MF_00540"/>
    </source>
</evidence>